<keyword id="KW-0067">ATP-binding</keyword>
<keyword id="KW-0460">Magnesium</keyword>
<keyword id="KW-0479">Metal-binding</keyword>
<keyword id="KW-0547">Nucleotide-binding</keyword>
<keyword id="KW-0548">Nucleotidyltransferase</keyword>
<keyword id="KW-0692">RNA repair</keyword>
<keyword id="KW-0694">RNA-binding</keyword>
<keyword id="KW-0808">Transferase</keyword>
<keyword id="KW-0819">tRNA processing</keyword>
<organism>
    <name type="scientific">Bacillus anthracis (strain A0248)</name>
    <dbReference type="NCBI Taxonomy" id="592021"/>
    <lineage>
        <taxon>Bacteria</taxon>
        <taxon>Bacillati</taxon>
        <taxon>Bacillota</taxon>
        <taxon>Bacilli</taxon>
        <taxon>Bacillales</taxon>
        <taxon>Bacillaceae</taxon>
        <taxon>Bacillus</taxon>
        <taxon>Bacillus cereus group</taxon>
    </lineage>
</organism>
<gene>
    <name evidence="1" type="primary">cca</name>
    <name type="ordered locus">BAA_1626</name>
</gene>
<comment type="function">
    <text evidence="1">Catalyzes the addition and repair of the essential 3'-terminal CCA sequence in tRNAs without using a nucleic acid template. Adds these three nucleotides in the order of C, C, and A to the tRNA nucleotide-73, using CTP and ATP as substrates and producing inorganic pyrophosphate. tRNA 3'-terminal CCA addition is required both for tRNA processing and repair. Also involved in tRNA surveillance by mediating tandem CCA addition to generate a CCACCA at the 3' terminus of unstable tRNAs. While stable tRNAs receive only 3'-terminal CCA, unstable tRNAs are marked with CCACCA and rapidly degraded.</text>
</comment>
<comment type="catalytic activity">
    <reaction evidence="1">
        <text>a tRNA precursor + 2 CTP + ATP = a tRNA with a 3' CCA end + 3 diphosphate</text>
        <dbReference type="Rhea" id="RHEA:14433"/>
        <dbReference type="Rhea" id="RHEA-COMP:10465"/>
        <dbReference type="Rhea" id="RHEA-COMP:10468"/>
        <dbReference type="ChEBI" id="CHEBI:30616"/>
        <dbReference type="ChEBI" id="CHEBI:33019"/>
        <dbReference type="ChEBI" id="CHEBI:37563"/>
        <dbReference type="ChEBI" id="CHEBI:74896"/>
        <dbReference type="ChEBI" id="CHEBI:83071"/>
        <dbReference type="EC" id="2.7.7.72"/>
    </reaction>
</comment>
<comment type="catalytic activity">
    <reaction evidence="1">
        <text>a tRNA with a 3' CCA end + 2 CTP + ATP = a tRNA with a 3' CCACCA end + 3 diphosphate</text>
        <dbReference type="Rhea" id="RHEA:76235"/>
        <dbReference type="Rhea" id="RHEA-COMP:10468"/>
        <dbReference type="Rhea" id="RHEA-COMP:18655"/>
        <dbReference type="ChEBI" id="CHEBI:30616"/>
        <dbReference type="ChEBI" id="CHEBI:33019"/>
        <dbReference type="ChEBI" id="CHEBI:37563"/>
        <dbReference type="ChEBI" id="CHEBI:83071"/>
        <dbReference type="ChEBI" id="CHEBI:195187"/>
    </reaction>
    <physiologicalReaction direction="left-to-right" evidence="1">
        <dbReference type="Rhea" id="RHEA:76236"/>
    </physiologicalReaction>
</comment>
<comment type="cofactor">
    <cofactor evidence="1">
        <name>Mg(2+)</name>
        <dbReference type="ChEBI" id="CHEBI:18420"/>
    </cofactor>
</comment>
<comment type="subunit">
    <text evidence="1">Homodimer.</text>
</comment>
<comment type="miscellaneous">
    <text evidence="1">A single active site specifically recognizes both ATP and CTP and is responsible for their addition.</text>
</comment>
<comment type="similarity">
    <text evidence="1">Belongs to the tRNA nucleotidyltransferase/poly(A) polymerase family. Bacterial CCA-adding enzyme type 3 subfamily.</text>
</comment>
<proteinExistence type="inferred from homology"/>
<accession>C3P5Q6</accession>
<evidence type="ECO:0000255" key="1">
    <source>
        <dbReference type="HAMAP-Rule" id="MF_01263"/>
    </source>
</evidence>
<feature type="chain" id="PRO_1000165129" description="CCA-adding enzyme">
    <location>
        <begin position="1"/>
        <end position="397"/>
    </location>
</feature>
<feature type="binding site" evidence="1">
    <location>
        <position position="26"/>
    </location>
    <ligand>
        <name>ATP</name>
        <dbReference type="ChEBI" id="CHEBI:30616"/>
    </ligand>
</feature>
<feature type="binding site" evidence="1">
    <location>
        <position position="26"/>
    </location>
    <ligand>
        <name>CTP</name>
        <dbReference type="ChEBI" id="CHEBI:37563"/>
    </ligand>
</feature>
<feature type="binding site" evidence="1">
    <location>
        <position position="29"/>
    </location>
    <ligand>
        <name>ATP</name>
        <dbReference type="ChEBI" id="CHEBI:30616"/>
    </ligand>
</feature>
<feature type="binding site" evidence="1">
    <location>
        <position position="29"/>
    </location>
    <ligand>
        <name>CTP</name>
        <dbReference type="ChEBI" id="CHEBI:37563"/>
    </ligand>
</feature>
<feature type="binding site" evidence="1">
    <location>
        <position position="39"/>
    </location>
    <ligand>
        <name>Mg(2+)</name>
        <dbReference type="ChEBI" id="CHEBI:18420"/>
    </ligand>
</feature>
<feature type="binding site" evidence="1">
    <location>
        <position position="41"/>
    </location>
    <ligand>
        <name>Mg(2+)</name>
        <dbReference type="ChEBI" id="CHEBI:18420"/>
    </ligand>
</feature>
<feature type="binding site" evidence="1">
    <location>
        <position position="110"/>
    </location>
    <ligand>
        <name>ATP</name>
        <dbReference type="ChEBI" id="CHEBI:30616"/>
    </ligand>
</feature>
<feature type="binding site" evidence="1">
    <location>
        <position position="110"/>
    </location>
    <ligand>
        <name>CTP</name>
        <dbReference type="ChEBI" id="CHEBI:37563"/>
    </ligand>
</feature>
<feature type="binding site" evidence="1">
    <location>
        <position position="153"/>
    </location>
    <ligand>
        <name>ATP</name>
        <dbReference type="ChEBI" id="CHEBI:30616"/>
    </ligand>
</feature>
<feature type="binding site" evidence="1">
    <location>
        <position position="153"/>
    </location>
    <ligand>
        <name>CTP</name>
        <dbReference type="ChEBI" id="CHEBI:37563"/>
    </ligand>
</feature>
<feature type="binding site" evidence="1">
    <location>
        <position position="156"/>
    </location>
    <ligand>
        <name>ATP</name>
        <dbReference type="ChEBI" id="CHEBI:30616"/>
    </ligand>
</feature>
<feature type="binding site" evidence="1">
    <location>
        <position position="156"/>
    </location>
    <ligand>
        <name>CTP</name>
        <dbReference type="ChEBI" id="CHEBI:37563"/>
    </ligand>
</feature>
<feature type="binding site" evidence="1">
    <location>
        <position position="159"/>
    </location>
    <ligand>
        <name>ATP</name>
        <dbReference type="ChEBI" id="CHEBI:30616"/>
    </ligand>
</feature>
<feature type="binding site" evidence="1">
    <location>
        <position position="159"/>
    </location>
    <ligand>
        <name>CTP</name>
        <dbReference type="ChEBI" id="CHEBI:37563"/>
    </ligand>
</feature>
<feature type="binding site" evidence="1">
    <location>
        <position position="162"/>
    </location>
    <ligand>
        <name>ATP</name>
        <dbReference type="ChEBI" id="CHEBI:30616"/>
    </ligand>
</feature>
<feature type="binding site" evidence="1">
    <location>
        <position position="162"/>
    </location>
    <ligand>
        <name>CTP</name>
        <dbReference type="ChEBI" id="CHEBI:37563"/>
    </ligand>
</feature>
<protein>
    <recommendedName>
        <fullName evidence="1">CCA-adding enzyme</fullName>
        <ecNumber evidence="1">2.7.7.72</ecNumber>
    </recommendedName>
    <alternativeName>
        <fullName evidence="1">CCA tRNA nucleotidyltransferase</fullName>
    </alternativeName>
    <alternativeName>
        <fullName evidence="1">tRNA CCA-pyrophosphorylase</fullName>
    </alternativeName>
    <alternativeName>
        <fullName evidence="1">tRNA adenylyl-/cytidylyl- transferase</fullName>
    </alternativeName>
    <alternativeName>
        <fullName evidence="1">tRNA nucleotidyltransferase</fullName>
    </alternativeName>
    <alternativeName>
        <fullName evidence="1">tRNA-NT</fullName>
    </alternativeName>
</protein>
<name>CCA_BACAA</name>
<dbReference type="EC" id="2.7.7.72" evidence="1"/>
<dbReference type="EMBL" id="CP001598">
    <property type="protein sequence ID" value="ACQ48594.1"/>
    <property type="molecule type" value="Genomic_DNA"/>
</dbReference>
<dbReference type="RefSeq" id="WP_000439304.1">
    <property type="nucleotide sequence ID" value="NC_012659.1"/>
</dbReference>
<dbReference type="SMR" id="C3P5Q6"/>
<dbReference type="GeneID" id="45021531"/>
<dbReference type="KEGG" id="bai:BAA_1626"/>
<dbReference type="HOGENOM" id="CLU_015961_3_0_9"/>
<dbReference type="GO" id="GO:0005524">
    <property type="term" value="F:ATP binding"/>
    <property type="evidence" value="ECO:0007669"/>
    <property type="project" value="UniProtKB-UniRule"/>
</dbReference>
<dbReference type="GO" id="GO:0004810">
    <property type="term" value="F:CCA tRNA nucleotidyltransferase activity"/>
    <property type="evidence" value="ECO:0007669"/>
    <property type="project" value="UniProtKB-UniRule"/>
</dbReference>
<dbReference type="GO" id="GO:0000287">
    <property type="term" value="F:magnesium ion binding"/>
    <property type="evidence" value="ECO:0007669"/>
    <property type="project" value="UniProtKB-UniRule"/>
</dbReference>
<dbReference type="GO" id="GO:0000049">
    <property type="term" value="F:tRNA binding"/>
    <property type="evidence" value="ECO:0007669"/>
    <property type="project" value="UniProtKB-UniRule"/>
</dbReference>
<dbReference type="GO" id="GO:0042245">
    <property type="term" value="P:RNA repair"/>
    <property type="evidence" value="ECO:0007669"/>
    <property type="project" value="UniProtKB-KW"/>
</dbReference>
<dbReference type="GO" id="GO:0001680">
    <property type="term" value="P:tRNA 3'-terminal CCA addition"/>
    <property type="evidence" value="ECO:0007669"/>
    <property type="project" value="UniProtKB-UniRule"/>
</dbReference>
<dbReference type="CDD" id="cd05398">
    <property type="entry name" value="NT_ClassII-CCAase"/>
    <property type="match status" value="1"/>
</dbReference>
<dbReference type="Gene3D" id="1.10.110.30">
    <property type="match status" value="1"/>
</dbReference>
<dbReference type="Gene3D" id="1.10.246.80">
    <property type="match status" value="1"/>
</dbReference>
<dbReference type="Gene3D" id="1.20.58.560">
    <property type="match status" value="1"/>
</dbReference>
<dbReference type="Gene3D" id="3.30.460.10">
    <property type="entry name" value="Beta Polymerase, domain 2"/>
    <property type="match status" value="1"/>
</dbReference>
<dbReference type="HAMAP" id="MF_01263">
    <property type="entry name" value="CCA_bact_type3"/>
    <property type="match status" value="1"/>
</dbReference>
<dbReference type="InterPro" id="IPR050264">
    <property type="entry name" value="Bact_CCA-adding_enz_type3_sf"/>
</dbReference>
<dbReference type="InterPro" id="IPR032810">
    <property type="entry name" value="CCA-adding_enz_C"/>
</dbReference>
<dbReference type="InterPro" id="IPR023068">
    <property type="entry name" value="CCA-adding_enz_firmicutes"/>
</dbReference>
<dbReference type="InterPro" id="IPR043519">
    <property type="entry name" value="NT_sf"/>
</dbReference>
<dbReference type="InterPro" id="IPR002646">
    <property type="entry name" value="PolA_pol_head_dom"/>
</dbReference>
<dbReference type="InterPro" id="IPR032828">
    <property type="entry name" value="PolyA_RNA-bd"/>
</dbReference>
<dbReference type="NCBIfam" id="NF009814">
    <property type="entry name" value="PRK13299.1"/>
    <property type="match status" value="1"/>
</dbReference>
<dbReference type="PANTHER" id="PTHR46173">
    <property type="entry name" value="CCA TRNA NUCLEOTIDYLTRANSFERASE 1, MITOCHONDRIAL"/>
    <property type="match status" value="1"/>
</dbReference>
<dbReference type="PANTHER" id="PTHR46173:SF1">
    <property type="entry name" value="CCA TRNA NUCLEOTIDYLTRANSFERASE 1, MITOCHONDRIAL"/>
    <property type="match status" value="1"/>
</dbReference>
<dbReference type="Pfam" id="PF01743">
    <property type="entry name" value="PolyA_pol"/>
    <property type="match status" value="1"/>
</dbReference>
<dbReference type="Pfam" id="PF12627">
    <property type="entry name" value="PolyA_pol_RNAbd"/>
    <property type="match status" value="1"/>
</dbReference>
<dbReference type="Pfam" id="PF13735">
    <property type="entry name" value="tRNA_NucTran2_2"/>
    <property type="match status" value="1"/>
</dbReference>
<dbReference type="SUPFAM" id="SSF81301">
    <property type="entry name" value="Nucleotidyltransferase"/>
    <property type="match status" value="1"/>
</dbReference>
<dbReference type="SUPFAM" id="SSF81891">
    <property type="entry name" value="Poly A polymerase C-terminal region-like"/>
    <property type="match status" value="1"/>
</dbReference>
<sequence length="397" mass="45932">MERFKKASSIIETLKQQGHEAYFVGGSVRDLIIDRPIGDIDIATSALPEEVMAIFPRHVPVGLEHGTVIVVENGEPYEVTTFRTESEYEDFRRPSSVQFVRSLEEDLKRRDFTMNAIAMTEEGEMVDLFAGQEAIQKREIVTVGNAADRFQEDALRMMRGIRFVSTLGFSLETKTKQAIETYGHLLEHIAIERITVEFEKLLTGTYCVKGLKELVETKLFSHLPYLQMSEERLLKATQYNWDSFETDIEAWAFFLYCIGEEHPSVFLRQWKFSNKKIKDIVAVLLTIRKRKEKDWDTVLLYKTGIHIAEMAERVYEAMIESYDHTSVERVQTLFQALPIKSRQEMDVTGNDLLNWASKKPGPWVAEMIQKIEEAIVQGNVVNEKECIREWLQECNLL</sequence>
<reference key="1">
    <citation type="submission" date="2009-04" db="EMBL/GenBank/DDBJ databases">
        <title>Genome sequence of Bacillus anthracis A0248.</title>
        <authorList>
            <person name="Dodson R.J."/>
            <person name="Munk A.C."/>
            <person name="Bruce D."/>
            <person name="Detter C."/>
            <person name="Tapia R."/>
            <person name="Sutton G."/>
            <person name="Sims D."/>
            <person name="Brettin T."/>
        </authorList>
    </citation>
    <scope>NUCLEOTIDE SEQUENCE [LARGE SCALE GENOMIC DNA]</scope>
    <source>
        <strain>A0248</strain>
    </source>
</reference>